<protein>
    <recommendedName>
        <fullName evidence="1">Queuine tRNA-ribosyltransferase</fullName>
        <ecNumber evidence="1">2.4.2.29</ecNumber>
    </recommendedName>
    <alternativeName>
        <fullName evidence="1">Guanine insertion enzyme</fullName>
    </alternativeName>
    <alternativeName>
        <fullName evidence="1">tRNA-guanine transglycosylase</fullName>
    </alternativeName>
</protein>
<accession>A8FM59</accession>
<feature type="chain" id="PRO_1000071573" description="Queuine tRNA-ribosyltransferase">
    <location>
        <begin position="1"/>
        <end position="373"/>
    </location>
</feature>
<feature type="region of interest" description="RNA binding" evidence="1">
    <location>
        <begin position="251"/>
        <end position="257"/>
    </location>
</feature>
<feature type="region of interest" description="RNA binding; important for wobble base 34 recognition" evidence="1">
    <location>
        <begin position="275"/>
        <end position="279"/>
    </location>
</feature>
<feature type="active site" description="Proton acceptor" evidence="1">
    <location>
        <position position="90"/>
    </location>
</feature>
<feature type="active site" description="Nucleophile" evidence="1">
    <location>
        <position position="270"/>
    </location>
</feature>
<feature type="binding site" evidence="1">
    <location>
        <begin position="90"/>
        <end position="94"/>
    </location>
    <ligand>
        <name>substrate</name>
    </ligand>
</feature>
<feature type="binding site" evidence="1">
    <location>
        <position position="144"/>
    </location>
    <ligand>
        <name>substrate</name>
    </ligand>
</feature>
<feature type="binding site" evidence="1">
    <location>
        <position position="193"/>
    </location>
    <ligand>
        <name>substrate</name>
    </ligand>
</feature>
<feature type="binding site" evidence="1">
    <location>
        <position position="220"/>
    </location>
    <ligand>
        <name>substrate</name>
    </ligand>
</feature>
<feature type="binding site" evidence="1">
    <location>
        <position position="308"/>
    </location>
    <ligand>
        <name>Zn(2+)</name>
        <dbReference type="ChEBI" id="CHEBI:29105"/>
    </ligand>
</feature>
<feature type="binding site" evidence="1">
    <location>
        <position position="310"/>
    </location>
    <ligand>
        <name>Zn(2+)</name>
        <dbReference type="ChEBI" id="CHEBI:29105"/>
    </ligand>
</feature>
<feature type="binding site" evidence="1">
    <location>
        <position position="313"/>
    </location>
    <ligand>
        <name>Zn(2+)</name>
        <dbReference type="ChEBI" id="CHEBI:29105"/>
    </ligand>
</feature>
<feature type="binding site" evidence="1">
    <location>
        <position position="339"/>
    </location>
    <ligand>
        <name>Zn(2+)</name>
        <dbReference type="ChEBI" id="CHEBI:29105"/>
    </ligand>
</feature>
<keyword id="KW-0328">Glycosyltransferase</keyword>
<keyword id="KW-0479">Metal-binding</keyword>
<keyword id="KW-0671">Queuosine biosynthesis</keyword>
<keyword id="KW-0808">Transferase</keyword>
<keyword id="KW-0819">tRNA processing</keyword>
<keyword id="KW-0862">Zinc</keyword>
<reference key="1">
    <citation type="journal article" date="2007" name="J. Bacteriol.">
        <title>The complete genome sequence of Campylobacter jejuni strain 81116 (NCTC11828).</title>
        <authorList>
            <person name="Pearson B.M."/>
            <person name="Gaskin D.J.H."/>
            <person name="Segers R.P.A.M."/>
            <person name="Wells J.M."/>
            <person name="Nuijten P.J.M."/>
            <person name="van Vliet A.H.M."/>
        </authorList>
    </citation>
    <scope>NUCLEOTIDE SEQUENCE [LARGE SCALE GENOMIC DNA]</scope>
    <source>
        <strain>81116 / NCTC 11828</strain>
    </source>
</reference>
<evidence type="ECO:0000255" key="1">
    <source>
        <dbReference type="HAMAP-Rule" id="MF_00168"/>
    </source>
</evidence>
<sequence>MEFKLKHKDGMARVCEITTAHSTFLTPVFMPVGTVGAVKSLDANDMKNELDAKIILANTYHMYLRPTSKVVKDFGGLHGFTKFDRSFLTDSGGFQAFSLSKNSKHFNEGIEFKSHIDGSRHLFTPKSVLDTQYDFNSDIMMILDDLVALPATKERVKISVDRTILWAKEAITYHKSMQNKGIGIGQNIFGIIQGGTDYKERKRCALSLNEMPFDGLAIGGLSVGEENALMYETVQNLNPYLDENRPRYLMGVGTPEDLVENVERGVDMFDCVMPTRNARNGTFFTSFGKFNIKKAEFINDHEAIDPACSCYTCCNFSRGYLNHLFKAKELTFFRLASLHNLHYYLELARKMREAILNNSFTQFKRNFYHLRGK</sequence>
<name>TGT_CAMJ8</name>
<gene>
    <name evidence="1" type="primary">tgt</name>
    <name type="ordered locus">C8J_0947</name>
</gene>
<comment type="function">
    <text evidence="1">Catalyzes the base-exchange of a guanine (G) residue with the queuine precursor 7-aminomethyl-7-deazaguanine (PreQ1) at position 34 (anticodon wobble position) in tRNAs with GU(N) anticodons (tRNA-Asp, -Asn, -His and -Tyr). Catalysis occurs through a double-displacement mechanism. The nucleophile active site attacks the C1' of nucleotide 34 to detach the guanine base from the RNA, forming a covalent enzyme-RNA intermediate. The proton acceptor active site deprotonates the incoming PreQ1, allowing a nucleophilic attack on the C1' of the ribose to form the product. After dissociation, two additional enzymatic reactions on the tRNA convert PreQ1 to queuine (Q), resulting in the hypermodified nucleoside queuosine (7-(((4,5-cis-dihydroxy-2-cyclopenten-1-yl)amino)methyl)-7-deazaguanosine).</text>
</comment>
<comment type="catalytic activity">
    <reaction evidence="1">
        <text>7-aminomethyl-7-carbaguanine + guanosine(34) in tRNA = 7-aminomethyl-7-carbaguanosine(34) in tRNA + guanine</text>
        <dbReference type="Rhea" id="RHEA:24104"/>
        <dbReference type="Rhea" id="RHEA-COMP:10341"/>
        <dbReference type="Rhea" id="RHEA-COMP:10342"/>
        <dbReference type="ChEBI" id="CHEBI:16235"/>
        <dbReference type="ChEBI" id="CHEBI:58703"/>
        <dbReference type="ChEBI" id="CHEBI:74269"/>
        <dbReference type="ChEBI" id="CHEBI:82833"/>
        <dbReference type="EC" id="2.4.2.29"/>
    </reaction>
</comment>
<comment type="cofactor">
    <cofactor evidence="1">
        <name>Zn(2+)</name>
        <dbReference type="ChEBI" id="CHEBI:29105"/>
    </cofactor>
    <text evidence="1">Binds 1 zinc ion per subunit.</text>
</comment>
<comment type="pathway">
    <text evidence="1">tRNA modification; tRNA-queuosine biosynthesis.</text>
</comment>
<comment type="subunit">
    <text evidence="1">Homodimer. Within each dimer, one monomer is responsible for RNA recognition and catalysis, while the other monomer binds to the replacement base PreQ1.</text>
</comment>
<comment type="similarity">
    <text evidence="1">Belongs to the queuine tRNA-ribosyltransferase family.</text>
</comment>
<proteinExistence type="inferred from homology"/>
<organism>
    <name type="scientific">Campylobacter jejuni subsp. jejuni serotype O:6 (strain 81116 / NCTC 11828)</name>
    <dbReference type="NCBI Taxonomy" id="407148"/>
    <lineage>
        <taxon>Bacteria</taxon>
        <taxon>Pseudomonadati</taxon>
        <taxon>Campylobacterota</taxon>
        <taxon>Epsilonproteobacteria</taxon>
        <taxon>Campylobacterales</taxon>
        <taxon>Campylobacteraceae</taxon>
        <taxon>Campylobacter</taxon>
    </lineage>
</organism>
<dbReference type="EC" id="2.4.2.29" evidence="1"/>
<dbReference type="EMBL" id="CP000814">
    <property type="protein sequence ID" value="ABV52546.1"/>
    <property type="molecule type" value="Genomic_DNA"/>
</dbReference>
<dbReference type="RefSeq" id="WP_002866050.1">
    <property type="nucleotide sequence ID" value="NC_009839.1"/>
</dbReference>
<dbReference type="SMR" id="A8FM59"/>
<dbReference type="KEGG" id="cju:C8J_0947"/>
<dbReference type="HOGENOM" id="CLU_022060_0_1_7"/>
<dbReference type="UniPathway" id="UPA00392"/>
<dbReference type="GO" id="GO:0005829">
    <property type="term" value="C:cytosol"/>
    <property type="evidence" value="ECO:0007669"/>
    <property type="project" value="TreeGrafter"/>
</dbReference>
<dbReference type="GO" id="GO:0046872">
    <property type="term" value="F:metal ion binding"/>
    <property type="evidence" value="ECO:0007669"/>
    <property type="project" value="UniProtKB-KW"/>
</dbReference>
<dbReference type="GO" id="GO:0008479">
    <property type="term" value="F:tRNA-guanosine(34) queuine transglycosylase activity"/>
    <property type="evidence" value="ECO:0007669"/>
    <property type="project" value="UniProtKB-UniRule"/>
</dbReference>
<dbReference type="GO" id="GO:0008616">
    <property type="term" value="P:queuosine biosynthetic process"/>
    <property type="evidence" value="ECO:0007669"/>
    <property type="project" value="UniProtKB-UniRule"/>
</dbReference>
<dbReference type="GO" id="GO:0101030">
    <property type="term" value="P:tRNA-guanine transglycosylation"/>
    <property type="evidence" value="ECO:0007669"/>
    <property type="project" value="InterPro"/>
</dbReference>
<dbReference type="Gene3D" id="3.20.20.105">
    <property type="entry name" value="Queuine tRNA-ribosyltransferase-like"/>
    <property type="match status" value="1"/>
</dbReference>
<dbReference type="HAMAP" id="MF_00168">
    <property type="entry name" value="Q_tRNA_Tgt"/>
    <property type="match status" value="1"/>
</dbReference>
<dbReference type="InterPro" id="IPR004803">
    <property type="entry name" value="TGT"/>
</dbReference>
<dbReference type="InterPro" id="IPR036511">
    <property type="entry name" value="TGT-like_sf"/>
</dbReference>
<dbReference type="InterPro" id="IPR002616">
    <property type="entry name" value="tRNA_ribo_trans-like"/>
</dbReference>
<dbReference type="NCBIfam" id="TIGR00430">
    <property type="entry name" value="Q_tRNA_tgt"/>
    <property type="match status" value="1"/>
</dbReference>
<dbReference type="NCBIfam" id="TIGR00449">
    <property type="entry name" value="tgt_general"/>
    <property type="match status" value="1"/>
</dbReference>
<dbReference type="PANTHER" id="PTHR43530">
    <property type="entry name" value="QUEUINE TRNA-RIBOSYLTRANSFERASE CATALYTIC SUBUNIT 1"/>
    <property type="match status" value="1"/>
</dbReference>
<dbReference type="PANTHER" id="PTHR43530:SF1">
    <property type="entry name" value="QUEUINE TRNA-RIBOSYLTRANSFERASE CATALYTIC SUBUNIT 1"/>
    <property type="match status" value="1"/>
</dbReference>
<dbReference type="Pfam" id="PF01702">
    <property type="entry name" value="TGT"/>
    <property type="match status" value="1"/>
</dbReference>
<dbReference type="SUPFAM" id="SSF51713">
    <property type="entry name" value="tRNA-guanine transglycosylase"/>
    <property type="match status" value="1"/>
</dbReference>